<accession>A3PN16</accession>
<feature type="chain" id="PRO_0000405019" description="(3S)-malyl-CoA thioesterase">
    <location>
        <begin position="1"/>
        <end position="285"/>
    </location>
</feature>
<feature type="binding site" evidence="3">
    <location>
        <position position="70"/>
    </location>
    <ligand>
        <name>substrate</name>
    </ligand>
</feature>
<feature type="binding site" evidence="3">
    <location>
        <position position="122"/>
    </location>
    <ligand>
        <name>Mg(2+)</name>
        <dbReference type="ChEBI" id="CHEBI:18420"/>
    </ligand>
</feature>
<feature type="binding site" evidence="3">
    <location>
        <position position="122"/>
    </location>
    <ligand>
        <name>substrate</name>
    </ligand>
</feature>
<feature type="binding site" evidence="3">
    <location>
        <position position="148"/>
    </location>
    <ligand>
        <name>Mg(2+)</name>
        <dbReference type="ChEBI" id="CHEBI:18420"/>
    </ligand>
</feature>
<protein>
    <recommendedName>
        <fullName evidence="2">(3S)-malyl-CoA thioesterase</fullName>
        <ecNumber>3.1.2.30</ecNumber>
    </recommendedName>
    <alternativeName>
        <fullName evidence="2">(3S)-malyl-CoA thiolesterase</fullName>
    </alternativeName>
</protein>
<gene>
    <name evidence="2" type="primary">mcl2</name>
    <name type="ordered locus">Rsph17029_2630</name>
</gene>
<keyword id="KW-0378">Hydrolase</keyword>
<keyword id="KW-0460">Magnesium</keyword>
<keyword id="KW-0479">Metal-binding</keyword>
<sequence length="285" mass="30818">MAHQAHPFRSVLYIPGSKERALEKAQGLAADAIIFDLEDAVAHDEKIHARALLKTTLETVDYGHRFRIVRVNGMDTEWGRADLEAFAEAKADAILIPKVSRAADLEAVAALVPDLPLWAMMETAQGMLNAAEIAAHPRLTGMVMGTNDLAKELGSRYRPDRLAMQAGLGLCLLAARAHGLTIVDGVYNAFKDEEGLRAECEQGRDMGFDGKTLIHPAQLEIANAVFSPSPAEIELANRQIAAFEEAERHGQGVAVVDGKIVENLHIVTARQTLAKAEAIAAFRAS</sequence>
<reference evidence="5" key="1">
    <citation type="submission" date="2007-02" db="EMBL/GenBank/DDBJ databases">
        <title>Complete sequence of chromosome 1 of Rhodobacter sphaeroides ATCC 17029.</title>
        <authorList>
            <person name="Copeland A."/>
            <person name="Lucas S."/>
            <person name="Lapidus A."/>
            <person name="Barry K."/>
            <person name="Detter J.C."/>
            <person name="Glavina del Rio T."/>
            <person name="Hammon N."/>
            <person name="Israni S."/>
            <person name="Dalin E."/>
            <person name="Tice H."/>
            <person name="Pitluck S."/>
            <person name="Kiss H."/>
            <person name="Brettin T."/>
            <person name="Bruce D."/>
            <person name="Han C."/>
            <person name="Tapia R."/>
            <person name="Gilna P."/>
            <person name="Schmutz J."/>
            <person name="Larimer F."/>
            <person name="Land M."/>
            <person name="Hauser L."/>
            <person name="Kyrpides N."/>
            <person name="Mikhailova N."/>
            <person name="Richardson P."/>
            <person name="Mackenzie C."/>
            <person name="Choudhary M."/>
            <person name="Donohue T.J."/>
            <person name="Kaplan S."/>
        </authorList>
    </citation>
    <scope>NUCLEOTIDE SEQUENCE [LARGE SCALE GENOMIC DNA]</scope>
    <source>
        <strain>ATCC 17029 / ATH 2.4.9</strain>
    </source>
</reference>
<organism>
    <name type="scientific">Cereibacter sphaeroides (strain ATCC 17029 / ATH 2.4.9)</name>
    <name type="common">Rhodobacter sphaeroides</name>
    <dbReference type="NCBI Taxonomy" id="349101"/>
    <lineage>
        <taxon>Bacteria</taxon>
        <taxon>Pseudomonadati</taxon>
        <taxon>Pseudomonadota</taxon>
        <taxon>Alphaproteobacteria</taxon>
        <taxon>Rhodobacterales</taxon>
        <taxon>Paracoccaceae</taxon>
        <taxon>Cereibacter</taxon>
    </lineage>
</organism>
<name>MCTE_CERS1</name>
<proteinExistence type="inferred from homology"/>
<evidence type="ECO:0000250" key="1"/>
<evidence type="ECO:0000250" key="2">
    <source>
        <dbReference type="UniProtKB" id="D3JV05"/>
    </source>
</evidence>
<evidence type="ECO:0000250" key="3">
    <source>
        <dbReference type="UniProtKB" id="Q9RUZ0"/>
    </source>
</evidence>
<evidence type="ECO:0000305" key="4"/>
<evidence type="ECO:0000312" key="5">
    <source>
        <dbReference type="EMBL" id="ABN77732.1"/>
    </source>
</evidence>
<dbReference type="EC" id="3.1.2.30"/>
<dbReference type="EMBL" id="CP000577">
    <property type="protein sequence ID" value="ABN77732.1"/>
    <property type="molecule type" value="Genomic_DNA"/>
</dbReference>
<dbReference type="RefSeq" id="WP_011841795.1">
    <property type="nucleotide sequence ID" value="NC_009049.1"/>
</dbReference>
<dbReference type="SMR" id="A3PN16"/>
<dbReference type="KEGG" id="rsh:Rsph17029_2630"/>
<dbReference type="HOGENOM" id="CLU_044864_0_1_5"/>
<dbReference type="GO" id="GO:0016787">
    <property type="term" value="F:hydrolase activity"/>
    <property type="evidence" value="ECO:0007669"/>
    <property type="project" value="UniProtKB-KW"/>
</dbReference>
<dbReference type="GO" id="GO:0000287">
    <property type="term" value="F:magnesium ion binding"/>
    <property type="evidence" value="ECO:0007669"/>
    <property type="project" value="TreeGrafter"/>
</dbReference>
<dbReference type="GO" id="GO:0006107">
    <property type="term" value="P:oxaloacetate metabolic process"/>
    <property type="evidence" value="ECO:0007669"/>
    <property type="project" value="TreeGrafter"/>
</dbReference>
<dbReference type="Gene3D" id="3.20.20.60">
    <property type="entry name" value="Phosphoenolpyruvate-binding domains"/>
    <property type="match status" value="1"/>
</dbReference>
<dbReference type="InterPro" id="IPR005000">
    <property type="entry name" value="Aldolase/citrate-lyase_domain"/>
</dbReference>
<dbReference type="InterPro" id="IPR011206">
    <property type="entry name" value="Citrate_lyase_beta/mcl1/mcl2"/>
</dbReference>
<dbReference type="InterPro" id="IPR015813">
    <property type="entry name" value="Pyrv/PenolPyrv_kinase-like_dom"/>
</dbReference>
<dbReference type="InterPro" id="IPR040442">
    <property type="entry name" value="Pyrv_kinase-like_dom_sf"/>
</dbReference>
<dbReference type="PANTHER" id="PTHR32308:SF10">
    <property type="entry name" value="CITRATE LYASE SUBUNIT BETA"/>
    <property type="match status" value="1"/>
</dbReference>
<dbReference type="PANTHER" id="PTHR32308">
    <property type="entry name" value="LYASE BETA SUBUNIT, PUTATIVE (AFU_ORTHOLOGUE AFUA_4G13030)-RELATED"/>
    <property type="match status" value="1"/>
</dbReference>
<dbReference type="Pfam" id="PF03328">
    <property type="entry name" value="HpcH_HpaI"/>
    <property type="match status" value="1"/>
</dbReference>
<dbReference type="PIRSF" id="PIRSF015582">
    <property type="entry name" value="Cit_lyase_B"/>
    <property type="match status" value="1"/>
</dbReference>
<dbReference type="SUPFAM" id="SSF51621">
    <property type="entry name" value="Phosphoenolpyruvate/pyruvate domain"/>
    <property type="match status" value="1"/>
</dbReference>
<comment type="function">
    <text evidence="1">Catalyzes the hydrolysis of (3S)-malyl-CoA to (3S)-malate and free CoA. Inactive towards beta-methylmalyl-CoA and other CoA esters (By similarity).</text>
</comment>
<comment type="catalytic activity">
    <reaction>
        <text>(S)-malyl-CoA + H2O = (S)-malate + CoA + H(+)</text>
        <dbReference type="Rhea" id="RHEA:38291"/>
        <dbReference type="ChEBI" id="CHEBI:15377"/>
        <dbReference type="ChEBI" id="CHEBI:15378"/>
        <dbReference type="ChEBI" id="CHEBI:15589"/>
        <dbReference type="ChEBI" id="CHEBI:57287"/>
        <dbReference type="ChEBI" id="CHEBI:57317"/>
        <dbReference type="EC" id="3.1.2.30"/>
    </reaction>
</comment>
<comment type="cofactor">
    <cofactor evidence="2">
        <name>Mg(2+)</name>
        <dbReference type="ChEBI" id="CHEBI:18420"/>
    </cofactor>
</comment>
<comment type="subunit">
    <text evidence="2">Homodimer or homotrimer.</text>
</comment>
<comment type="similarity">
    <text evidence="4">Belongs to the HpcH/HpaI aldolase family.</text>
</comment>